<sequence>MSTLEQKLTEIISAPVEALGYELVGIEFIRGRQSTLRIYIDSDDGITVDACADVSHQVSAVLDVEDPITVAYNLEVSSPGLDRPMFTAEHYTRYLGEEVTLVLRMAMQNRRKWQGIIKAVDGEMITVTVDGKDEVFALSNIQKANLVPHF</sequence>
<comment type="function">
    <text evidence="1">Required for maturation of 30S ribosomal subunits.</text>
</comment>
<comment type="subcellular location">
    <subcellularLocation>
        <location evidence="1">Cytoplasm</location>
    </subcellularLocation>
</comment>
<comment type="similarity">
    <text evidence="1">Belongs to the RimP family.</text>
</comment>
<protein>
    <recommendedName>
        <fullName evidence="1">Ribosome maturation factor RimP</fullName>
    </recommendedName>
</protein>
<feature type="chain" id="PRO_0000384813" description="Ribosome maturation factor RimP">
    <location>
        <begin position="1"/>
        <end position="150"/>
    </location>
</feature>
<proteinExistence type="inferred from homology"/>
<reference key="1">
    <citation type="submission" date="2008-02" db="EMBL/GenBank/DDBJ databases">
        <title>Complete sequence of Yersinia pseudotuberculosis YPIII.</title>
        <authorList>
            <consortium name="US DOE Joint Genome Institute"/>
            <person name="Copeland A."/>
            <person name="Lucas S."/>
            <person name="Lapidus A."/>
            <person name="Glavina del Rio T."/>
            <person name="Dalin E."/>
            <person name="Tice H."/>
            <person name="Bruce D."/>
            <person name="Goodwin L."/>
            <person name="Pitluck S."/>
            <person name="Munk A.C."/>
            <person name="Brettin T."/>
            <person name="Detter J.C."/>
            <person name="Han C."/>
            <person name="Tapia R."/>
            <person name="Schmutz J."/>
            <person name="Larimer F."/>
            <person name="Land M."/>
            <person name="Hauser L."/>
            <person name="Challacombe J.F."/>
            <person name="Green L."/>
            <person name="Lindler L.E."/>
            <person name="Nikolich M.P."/>
            <person name="Richardson P."/>
        </authorList>
    </citation>
    <scope>NUCLEOTIDE SEQUENCE [LARGE SCALE GENOMIC DNA]</scope>
    <source>
        <strain>YPIII</strain>
    </source>
</reference>
<accession>B1JLY2</accession>
<organism>
    <name type="scientific">Yersinia pseudotuberculosis serotype O:3 (strain YPIII)</name>
    <dbReference type="NCBI Taxonomy" id="502800"/>
    <lineage>
        <taxon>Bacteria</taxon>
        <taxon>Pseudomonadati</taxon>
        <taxon>Pseudomonadota</taxon>
        <taxon>Gammaproteobacteria</taxon>
        <taxon>Enterobacterales</taxon>
        <taxon>Yersiniaceae</taxon>
        <taxon>Yersinia</taxon>
    </lineage>
</organism>
<keyword id="KW-0963">Cytoplasm</keyword>
<keyword id="KW-0690">Ribosome biogenesis</keyword>
<name>RIMP_YERPY</name>
<evidence type="ECO:0000255" key="1">
    <source>
        <dbReference type="HAMAP-Rule" id="MF_01077"/>
    </source>
</evidence>
<gene>
    <name evidence="1" type="primary">rimP</name>
    <name type="ordered locus">YPK_3732</name>
</gene>
<dbReference type="EMBL" id="CP000950">
    <property type="protein sequence ID" value="ACA69999.1"/>
    <property type="molecule type" value="Genomic_DNA"/>
</dbReference>
<dbReference type="RefSeq" id="WP_002222054.1">
    <property type="nucleotide sequence ID" value="NZ_CP009792.1"/>
</dbReference>
<dbReference type="SMR" id="B1JLY2"/>
<dbReference type="GeneID" id="97457868"/>
<dbReference type="KEGG" id="ypy:YPK_3732"/>
<dbReference type="PATRIC" id="fig|502800.11.peg.80"/>
<dbReference type="GO" id="GO:0005829">
    <property type="term" value="C:cytosol"/>
    <property type="evidence" value="ECO:0007669"/>
    <property type="project" value="TreeGrafter"/>
</dbReference>
<dbReference type="GO" id="GO:0000028">
    <property type="term" value="P:ribosomal small subunit assembly"/>
    <property type="evidence" value="ECO:0007669"/>
    <property type="project" value="TreeGrafter"/>
</dbReference>
<dbReference type="GO" id="GO:0006412">
    <property type="term" value="P:translation"/>
    <property type="evidence" value="ECO:0007669"/>
    <property type="project" value="TreeGrafter"/>
</dbReference>
<dbReference type="CDD" id="cd01734">
    <property type="entry name" value="YlxS_C"/>
    <property type="match status" value="1"/>
</dbReference>
<dbReference type="FunFam" id="2.30.30.180:FF:000001">
    <property type="entry name" value="Ribosome maturation factor RimP"/>
    <property type="match status" value="1"/>
</dbReference>
<dbReference type="FunFam" id="3.30.300.70:FF:000001">
    <property type="entry name" value="Ribosome maturation factor RimP"/>
    <property type="match status" value="1"/>
</dbReference>
<dbReference type="Gene3D" id="2.30.30.180">
    <property type="entry name" value="Ribosome maturation factor RimP, C-terminal domain"/>
    <property type="match status" value="1"/>
</dbReference>
<dbReference type="Gene3D" id="3.30.300.70">
    <property type="entry name" value="RimP-like superfamily, N-terminal"/>
    <property type="match status" value="1"/>
</dbReference>
<dbReference type="HAMAP" id="MF_01077">
    <property type="entry name" value="RimP"/>
    <property type="match status" value="1"/>
</dbReference>
<dbReference type="InterPro" id="IPR003728">
    <property type="entry name" value="Ribosome_maturation_RimP"/>
</dbReference>
<dbReference type="InterPro" id="IPR028998">
    <property type="entry name" value="RimP_C"/>
</dbReference>
<dbReference type="InterPro" id="IPR036847">
    <property type="entry name" value="RimP_C_sf"/>
</dbReference>
<dbReference type="InterPro" id="IPR028989">
    <property type="entry name" value="RimP_N"/>
</dbReference>
<dbReference type="InterPro" id="IPR035956">
    <property type="entry name" value="RimP_N_sf"/>
</dbReference>
<dbReference type="NCBIfam" id="NF000927">
    <property type="entry name" value="PRK00092.1-1"/>
    <property type="match status" value="1"/>
</dbReference>
<dbReference type="PANTHER" id="PTHR33867">
    <property type="entry name" value="RIBOSOME MATURATION FACTOR RIMP"/>
    <property type="match status" value="1"/>
</dbReference>
<dbReference type="PANTHER" id="PTHR33867:SF1">
    <property type="entry name" value="RIBOSOME MATURATION FACTOR RIMP"/>
    <property type="match status" value="1"/>
</dbReference>
<dbReference type="Pfam" id="PF17384">
    <property type="entry name" value="DUF150_C"/>
    <property type="match status" value="1"/>
</dbReference>
<dbReference type="Pfam" id="PF02576">
    <property type="entry name" value="RimP_N"/>
    <property type="match status" value="1"/>
</dbReference>
<dbReference type="SUPFAM" id="SSF74942">
    <property type="entry name" value="YhbC-like, C-terminal domain"/>
    <property type="match status" value="1"/>
</dbReference>
<dbReference type="SUPFAM" id="SSF75420">
    <property type="entry name" value="YhbC-like, N-terminal domain"/>
    <property type="match status" value="1"/>
</dbReference>